<organism>
    <name type="scientific">Neisseria gonorrhoeae</name>
    <dbReference type="NCBI Taxonomy" id="485"/>
    <lineage>
        <taxon>Bacteria</taxon>
        <taxon>Pseudomonadati</taxon>
        <taxon>Pseudomonadota</taxon>
        <taxon>Betaproteobacteria</taxon>
        <taxon>Neisseriales</taxon>
        <taxon>Neisseriaceae</taxon>
        <taxon>Neisseria</taxon>
    </lineage>
</organism>
<dbReference type="EMBL" id="X51901">
    <property type="protein sequence ID" value="CAA36182.1"/>
    <property type="molecule type" value="Genomic_DNA"/>
</dbReference>
<dbReference type="PIR" id="S10256">
    <property type="entry name" value="S10256"/>
</dbReference>
<dbReference type="PDB" id="1R1N">
    <property type="method" value="X-ray"/>
    <property type="resolution" value="1.74 A"/>
    <property type="chains" value="A/B/C/D/E/F/G/H/I=23-330"/>
</dbReference>
<dbReference type="PDB" id="1XC1">
    <property type="method" value="X-ray"/>
    <property type="resolution" value="1.51 A"/>
    <property type="chains" value="A/B/C/D/E/F/G/H/I=23-330"/>
</dbReference>
<dbReference type="PDB" id="3TYH">
    <property type="method" value="X-ray"/>
    <property type="resolution" value="2.10 A"/>
    <property type="chains" value="A/B/C/D/E/F/G/H/I=23-330"/>
</dbReference>
<dbReference type="PDBsum" id="1R1N"/>
<dbReference type="PDBsum" id="1XC1"/>
<dbReference type="PDBsum" id="3TYH"/>
<dbReference type="SMR" id="P17259"/>
<dbReference type="EvolutionaryTrace" id="P17259"/>
<dbReference type="GO" id="GO:0030288">
    <property type="term" value="C:outer membrane-bounded periplasmic space"/>
    <property type="evidence" value="ECO:0007669"/>
    <property type="project" value="TreeGrafter"/>
</dbReference>
<dbReference type="GO" id="GO:0046872">
    <property type="term" value="F:metal ion binding"/>
    <property type="evidence" value="ECO:0007669"/>
    <property type="project" value="UniProtKB-KW"/>
</dbReference>
<dbReference type="GO" id="GO:0006826">
    <property type="term" value="P:iron ion transport"/>
    <property type="evidence" value="ECO:0007669"/>
    <property type="project" value="UniProtKB-KW"/>
</dbReference>
<dbReference type="GO" id="GO:0055085">
    <property type="term" value="P:transmembrane transport"/>
    <property type="evidence" value="ECO:0007669"/>
    <property type="project" value="InterPro"/>
</dbReference>
<dbReference type="CDD" id="cd13543">
    <property type="entry name" value="PBP2_Fbp"/>
    <property type="match status" value="1"/>
</dbReference>
<dbReference type="Gene3D" id="3.40.190.10">
    <property type="entry name" value="Periplasmic binding protein-like II"/>
    <property type="match status" value="2"/>
</dbReference>
<dbReference type="InterPro" id="IPR026045">
    <property type="entry name" value="Ferric-bd"/>
</dbReference>
<dbReference type="InterPro" id="IPR006059">
    <property type="entry name" value="SBP"/>
</dbReference>
<dbReference type="InterPro" id="IPR006061">
    <property type="entry name" value="SBP_1_CS"/>
</dbReference>
<dbReference type="PANTHER" id="PTHR30006:SF15">
    <property type="entry name" value="IRON-UTILIZATION PERIPLASMIC PROTEIN"/>
    <property type="match status" value="1"/>
</dbReference>
<dbReference type="PANTHER" id="PTHR30006">
    <property type="entry name" value="THIAMINE-BINDING PERIPLASMIC PROTEIN-RELATED"/>
    <property type="match status" value="1"/>
</dbReference>
<dbReference type="Pfam" id="PF01547">
    <property type="entry name" value="SBP_bac_1"/>
    <property type="match status" value="1"/>
</dbReference>
<dbReference type="PIRSF" id="PIRSF002825">
    <property type="entry name" value="CfbpA"/>
    <property type="match status" value="1"/>
</dbReference>
<dbReference type="SUPFAM" id="SSF53850">
    <property type="entry name" value="Periplasmic binding protein-like II"/>
    <property type="match status" value="1"/>
</dbReference>
<dbReference type="PROSITE" id="PS01037">
    <property type="entry name" value="SBP_BACTERIAL_1"/>
    <property type="match status" value="1"/>
</dbReference>
<sequence>MKTSIRYALLAAALTAATPALADITVYNGQHKEAAQAVADAFTRATGIKVKLNSAKGDQLAGQIKEEGSRSPADVFYSEQIPALATLSAANLLEPLPASTINETRGKGVPVAAKKDWVALSGRSRVVVYDTRKLSEKDLEKSVLNYATPKWKNRIGYVPTSGAFLEQIVAIVKLKGEAAALKWLKGLKEYGKPYAKNSVALQAVENGEIDAALINNYYWHAFAREKGVQNVHTRLNFVRHRDPGALVTYSGAVLKSSQNKDEAKKFVAFLAGKEGQRALTAVRAEYPLNPHVVSTFNLEPIAKLEAPQVSATTVSEKEHATRLLEQAGMK</sequence>
<keyword id="KW-0002">3D-structure</keyword>
<keyword id="KW-0903">Direct protein sequencing</keyword>
<keyword id="KW-0406">Ion transport</keyword>
<keyword id="KW-0408">Iron</keyword>
<keyword id="KW-0410">Iron transport</keyword>
<keyword id="KW-0479">Metal-binding</keyword>
<keyword id="KW-0574">Periplasm</keyword>
<keyword id="KW-0732">Signal</keyword>
<keyword id="KW-0813">Transport</keyword>
<evidence type="ECO:0000250" key="1"/>
<evidence type="ECO:0000269" key="2">
    <source>
    </source>
</evidence>
<evidence type="ECO:0000305" key="3"/>
<evidence type="ECO:0007829" key="4">
    <source>
        <dbReference type="PDB" id="1R1N"/>
    </source>
</evidence>
<evidence type="ECO:0007829" key="5">
    <source>
        <dbReference type="PDB" id="1XC1"/>
    </source>
</evidence>
<name>FBP_NEIGO</name>
<accession>P17259</accession>
<feature type="signal peptide" evidence="2">
    <location>
        <begin position="1"/>
        <end position="22"/>
    </location>
</feature>
<feature type="chain" id="PRO_0000031690" description="Major ferric iron-binding protein">
    <location>
        <begin position="23"/>
        <end position="330"/>
    </location>
</feature>
<feature type="binding site" evidence="1">
    <location>
        <position position="31"/>
    </location>
    <ligand>
        <name>Fe cation</name>
        <dbReference type="ChEBI" id="CHEBI:24875"/>
    </ligand>
</feature>
<feature type="binding site" evidence="1">
    <location>
        <position position="79"/>
    </location>
    <ligand>
        <name>Fe cation</name>
        <dbReference type="ChEBI" id="CHEBI:24875"/>
    </ligand>
</feature>
<feature type="binding site" evidence="1">
    <location>
        <position position="217"/>
    </location>
    <ligand>
        <name>Fe cation</name>
        <dbReference type="ChEBI" id="CHEBI:24875"/>
    </ligand>
</feature>
<feature type="binding site" evidence="1">
    <location>
        <position position="218"/>
    </location>
    <ligand>
        <name>Fe cation</name>
        <dbReference type="ChEBI" id="CHEBI:24875"/>
    </ligand>
</feature>
<feature type="strand" evidence="5">
    <location>
        <begin position="24"/>
        <end position="28"/>
    </location>
</feature>
<feature type="helix" evidence="5">
    <location>
        <begin position="32"/>
        <end position="46"/>
    </location>
</feature>
<feature type="strand" evidence="5">
    <location>
        <begin position="50"/>
        <end position="54"/>
    </location>
</feature>
<feature type="helix" evidence="5">
    <location>
        <begin position="57"/>
        <end position="65"/>
    </location>
</feature>
<feature type="helix" evidence="4">
    <location>
        <begin position="68"/>
        <end position="70"/>
    </location>
</feature>
<feature type="strand" evidence="5">
    <location>
        <begin position="74"/>
        <end position="79"/>
    </location>
</feature>
<feature type="helix" evidence="5">
    <location>
        <begin position="81"/>
        <end position="89"/>
    </location>
</feature>
<feature type="helix" evidence="5">
    <location>
        <begin position="98"/>
        <end position="103"/>
    </location>
</feature>
<feature type="strand" evidence="5">
    <location>
        <begin position="118"/>
        <end position="130"/>
    </location>
</feature>
<feature type="turn" evidence="5">
    <location>
        <begin position="131"/>
        <end position="133"/>
    </location>
</feature>
<feature type="helix" evidence="5">
    <location>
        <begin position="136"/>
        <end position="138"/>
    </location>
</feature>
<feature type="helix" evidence="5">
    <location>
        <begin position="143"/>
        <end position="146"/>
    </location>
</feature>
<feature type="helix" evidence="5">
    <location>
        <begin position="149"/>
        <end position="151"/>
    </location>
</feature>
<feature type="turn" evidence="5">
    <location>
        <begin position="152"/>
        <end position="154"/>
    </location>
</feature>
<feature type="strand" evidence="5">
    <location>
        <begin position="155"/>
        <end position="157"/>
    </location>
</feature>
<feature type="helix" evidence="5">
    <location>
        <begin position="162"/>
        <end position="175"/>
    </location>
</feature>
<feature type="helix" evidence="5">
    <location>
        <begin position="177"/>
        <end position="190"/>
    </location>
</feature>
<feature type="strand" evidence="5">
    <location>
        <begin position="191"/>
        <end position="193"/>
    </location>
</feature>
<feature type="helix" evidence="5">
    <location>
        <begin position="197"/>
        <end position="205"/>
    </location>
</feature>
<feature type="strand" evidence="5">
    <location>
        <begin position="208"/>
        <end position="215"/>
    </location>
</feature>
<feature type="helix" evidence="5">
    <location>
        <begin position="216"/>
        <end position="226"/>
    </location>
</feature>
<feature type="helix" evidence="5">
    <location>
        <begin position="228"/>
        <end position="230"/>
    </location>
</feature>
<feature type="strand" evidence="5">
    <location>
        <begin position="233"/>
        <end position="236"/>
    </location>
</feature>
<feature type="helix" evidence="5">
    <location>
        <begin position="243"/>
        <end position="245"/>
    </location>
</feature>
<feature type="strand" evidence="5">
    <location>
        <begin position="247"/>
        <end position="254"/>
    </location>
</feature>
<feature type="helix" evidence="5">
    <location>
        <begin position="260"/>
        <end position="271"/>
    </location>
</feature>
<feature type="helix" evidence="5">
    <location>
        <begin position="273"/>
        <end position="279"/>
    </location>
</feature>
<feature type="turn" evidence="5">
    <location>
        <begin position="280"/>
        <end position="282"/>
    </location>
</feature>
<feature type="strand" evidence="5">
    <location>
        <begin position="286"/>
        <end position="289"/>
    </location>
</feature>
<feature type="helix" evidence="5">
    <location>
        <begin position="301"/>
        <end position="303"/>
    </location>
</feature>
<feature type="helix" evidence="5">
    <location>
        <begin position="314"/>
        <end position="327"/>
    </location>
</feature>
<comment type="function">
    <text>This protein may be a central component in the iron-acquisition system.</text>
</comment>
<comment type="subcellular location">
    <subcellularLocation>
        <location>Periplasm</location>
    </subcellularLocation>
</comment>
<comment type="induction">
    <text>By iron deprivation.</text>
</comment>
<comment type="miscellaneous">
    <text>Iron co-purifies with FBP and is bound by the protein as a Fe(3+) ion at an approximate molar ratio of 1:1.</text>
</comment>
<comment type="similarity">
    <text evidence="3">Belongs to the bacterial solute-binding protein 1 family.</text>
</comment>
<protein>
    <recommendedName>
        <fullName>Major ferric iron-binding protein</fullName>
        <shortName>FBP</shortName>
    </recommendedName>
    <alternativeName>
        <fullName>Major iron-regulated protein</fullName>
        <shortName>MIRP</shortName>
    </alternativeName>
</protein>
<proteinExistence type="evidence at protein level"/>
<gene>
    <name type="primary">fbp</name>
</gene>
<reference key="1">
    <citation type="journal article" date="1990" name="J. Exp. Med.">
        <title>Molecular cloning and characterization of the structural gene for the major iron-regulated protein expressed by Neisseria gonorrhoeae.</title>
        <authorList>
            <person name="Berish S.A."/>
            <person name="Mietzner T.A."/>
            <person name="Mayer L.W."/>
            <person name="Genco C.A."/>
            <person name="Holloway B.P."/>
            <person name="Morse S.A."/>
        </authorList>
    </citation>
    <scope>NUCLEOTIDE SEQUENCE [GENOMIC DNA]</scope>
    <scope>PARTIAL PROTEIN SEQUENCE</scope>
    <source>
        <strain>ATCC 33084 / F62 / M-1914</strain>
    </source>
</reference>
<reference key="2">
    <citation type="journal article" date="1987" name="J. Exp. Med.">
        <title>Purification and characterization of the major iron-regulated protein expressed by pathogenic Neisseriae.</title>
        <authorList>
            <person name="Mietzner T.A."/>
            <person name="Bolan G."/>
            <person name="Schoolnik G.K."/>
            <person name="Morse S.A."/>
        </authorList>
    </citation>
    <scope>PROTEIN SEQUENCE OF 23-69</scope>
</reference>